<accession>P0A8U2</accession>
<accession>P30865</accession>
<accession>P75671</accession>
<reference key="1">
    <citation type="submission" date="1992-07" db="EMBL/GenBank/DDBJ databases">
        <authorList>
            <person name="Nishimura K."/>
            <person name="Komine Y."/>
            <person name="Miyamoto K."/>
            <person name="Kitabatake M."/>
            <person name="Mathunaga F."/>
            <person name="Hisano T."/>
            <person name="Miki T."/>
            <person name="Inokuchi H."/>
        </authorList>
    </citation>
    <scope>NUCLEOTIDE SEQUENCE [GENOMIC DNA]</scope>
    <source>
        <strain>K12</strain>
    </source>
</reference>
<reference key="2">
    <citation type="submission" date="1996-02" db="EMBL/GenBank/DDBJ databases">
        <title>Systematic sequencing of the Escherichia coli genome: analysis of the 4.0 - 6.0 min (189,987 - 281,416bp) region.</title>
        <authorList>
            <person name="Takemoto K."/>
            <person name="Mori H."/>
            <person name="Murayama N."/>
            <person name="Kataoka K."/>
            <person name="Yano M."/>
            <person name="Itoh T."/>
            <person name="Yamamoto Y."/>
            <person name="Inokuchi H."/>
            <person name="Miki T."/>
            <person name="Hatada E."/>
            <person name="Fukuda R."/>
            <person name="Ichihara S."/>
            <person name="Mizuno T."/>
            <person name="Makino K."/>
            <person name="Nakata A."/>
            <person name="Yura T."/>
            <person name="Sampei G."/>
            <person name="Mizobuchi K."/>
        </authorList>
    </citation>
    <scope>NUCLEOTIDE SEQUENCE [LARGE SCALE GENOMIC DNA]</scope>
    <source>
        <strain>K12 / W3110 / ATCC 27325 / DSM 5911</strain>
    </source>
</reference>
<reference key="3">
    <citation type="submission" date="1997-01" db="EMBL/GenBank/DDBJ databases">
        <title>Sequence of minutes 4-25 of Escherichia coli.</title>
        <authorList>
            <person name="Chung E."/>
            <person name="Allen E."/>
            <person name="Araujo R."/>
            <person name="Aparicio A.M."/>
            <person name="Davis K."/>
            <person name="Duncan M."/>
            <person name="Federspiel N."/>
            <person name="Hyman R."/>
            <person name="Kalman S."/>
            <person name="Komp C."/>
            <person name="Kurdi O."/>
            <person name="Lew H."/>
            <person name="Lin D."/>
            <person name="Namath A."/>
            <person name="Oefner P."/>
            <person name="Roberts D."/>
            <person name="Schramm S."/>
            <person name="Davis R.W."/>
        </authorList>
    </citation>
    <scope>NUCLEOTIDE SEQUENCE [LARGE SCALE GENOMIC DNA]</scope>
    <source>
        <strain>K12 / MG1655 / ATCC 47076</strain>
    </source>
</reference>
<reference key="4">
    <citation type="journal article" date="1997" name="Science">
        <title>The complete genome sequence of Escherichia coli K-12.</title>
        <authorList>
            <person name="Blattner F.R."/>
            <person name="Plunkett G. III"/>
            <person name="Bloch C.A."/>
            <person name="Perna N.T."/>
            <person name="Burland V."/>
            <person name="Riley M."/>
            <person name="Collado-Vides J."/>
            <person name="Glasner J.D."/>
            <person name="Rode C.K."/>
            <person name="Mayhew G.F."/>
            <person name="Gregor J."/>
            <person name="Davis N.W."/>
            <person name="Kirkpatrick H.A."/>
            <person name="Goeden M.A."/>
            <person name="Rose D.J."/>
            <person name="Mau B."/>
            <person name="Shao Y."/>
        </authorList>
    </citation>
    <scope>NUCLEOTIDE SEQUENCE [LARGE SCALE GENOMIC DNA]</scope>
    <source>
        <strain>K12 / MG1655 / ATCC 47076</strain>
    </source>
</reference>
<reference key="5">
    <citation type="journal article" date="2006" name="Mol. Syst. Biol.">
        <title>Highly accurate genome sequences of Escherichia coli K-12 strains MG1655 and W3110.</title>
        <authorList>
            <person name="Hayashi K."/>
            <person name="Morooka N."/>
            <person name="Yamamoto Y."/>
            <person name="Fujita K."/>
            <person name="Isono K."/>
            <person name="Choi S."/>
            <person name="Ohtsubo E."/>
            <person name="Baba T."/>
            <person name="Wanner B.L."/>
            <person name="Mori H."/>
            <person name="Horiuchi T."/>
        </authorList>
    </citation>
    <scope>NUCLEOTIDE SEQUENCE [LARGE SCALE GENOMIC DNA]</scope>
    <source>
        <strain>K12 / W3110 / ATCC 27325 / DSM 5911</strain>
    </source>
</reference>
<reference key="6">
    <citation type="journal article" date="1991" name="FEMS Microbiol. Lett.">
        <title>Molecular cloning and DNA sequence of dniR, a gene affecting anaerobic expression of the Escherichia coli hexaheme nitrite reductase.</title>
        <authorList>
            <person name="Kajie S."/>
            <person name="Ideta R."/>
            <person name="Yamato I."/>
            <person name="Anraku Y."/>
        </authorList>
    </citation>
    <scope>NUCLEOTIDE SEQUENCE [GENOMIC DNA] OF 47-259</scope>
    <source>
        <strain>K12</strain>
    </source>
</reference>
<keyword id="KW-0963">Cytoplasm</keyword>
<keyword id="KW-1185">Reference proteome</keyword>
<name>YAFD_ECOLI</name>
<evidence type="ECO:0000305" key="1"/>
<gene>
    <name type="primary">yafD</name>
    <name type="ordered locus">b0209</name>
    <name type="ordered locus">JW5017</name>
</gene>
<dbReference type="EMBL" id="D12650">
    <property type="protein sequence ID" value="BAA02172.1"/>
    <property type="status" value="ALT_INIT"/>
    <property type="molecule type" value="Genomic_DNA"/>
</dbReference>
<dbReference type="EMBL" id="U70214">
    <property type="protein sequence ID" value="AAB08631.1"/>
    <property type="status" value="ALT_INIT"/>
    <property type="molecule type" value="Genomic_DNA"/>
</dbReference>
<dbReference type="EMBL" id="U00096">
    <property type="protein sequence ID" value="AAC73314.1"/>
    <property type="molecule type" value="Genomic_DNA"/>
</dbReference>
<dbReference type="EMBL" id="AP009048">
    <property type="protein sequence ID" value="BAA77880.2"/>
    <property type="molecule type" value="Genomic_DNA"/>
</dbReference>
<dbReference type="EMBL" id="X60739">
    <property type="status" value="NOT_ANNOTATED_CDS"/>
    <property type="molecule type" value="Genomic_DNA"/>
</dbReference>
<dbReference type="PIR" id="C64745">
    <property type="entry name" value="C64745"/>
</dbReference>
<dbReference type="RefSeq" id="NP_414745.1">
    <property type="nucleotide sequence ID" value="NC_000913.3"/>
</dbReference>
<dbReference type="RefSeq" id="WP_001230983.1">
    <property type="nucleotide sequence ID" value="NZ_STEB01000020.1"/>
</dbReference>
<dbReference type="SMR" id="P0A8U2"/>
<dbReference type="BioGRID" id="4261255">
    <property type="interactions" value="230"/>
</dbReference>
<dbReference type="DIP" id="DIP-47877N"/>
<dbReference type="FunCoup" id="P0A8U2">
    <property type="interactions" value="6"/>
</dbReference>
<dbReference type="STRING" id="511145.b0209"/>
<dbReference type="jPOST" id="P0A8U2"/>
<dbReference type="PaxDb" id="511145-b0209"/>
<dbReference type="EnsemblBacteria" id="AAC73314">
    <property type="protein sequence ID" value="AAC73314"/>
    <property type="gene ID" value="b0209"/>
</dbReference>
<dbReference type="GeneID" id="946286"/>
<dbReference type="KEGG" id="ecj:JW5017"/>
<dbReference type="KEGG" id="eco:b0209"/>
<dbReference type="KEGG" id="ecoc:C3026_00975"/>
<dbReference type="PATRIC" id="fig|511145.12.peg.211"/>
<dbReference type="EchoBASE" id="EB1603"/>
<dbReference type="eggNOG" id="COG3021">
    <property type="taxonomic scope" value="Bacteria"/>
</dbReference>
<dbReference type="HOGENOM" id="CLU_083563_0_0_6"/>
<dbReference type="InParanoid" id="P0A8U2"/>
<dbReference type="OMA" id="HAINFSF"/>
<dbReference type="OrthoDB" id="9793162at2"/>
<dbReference type="PhylomeDB" id="P0A8U2"/>
<dbReference type="BioCyc" id="EcoCyc:EG11650-MONOMER"/>
<dbReference type="PRO" id="PR:P0A8U2"/>
<dbReference type="Proteomes" id="UP000000625">
    <property type="component" value="Chromosome"/>
</dbReference>
<dbReference type="GO" id="GO:0005737">
    <property type="term" value="C:cytoplasm"/>
    <property type="evidence" value="ECO:0007669"/>
    <property type="project" value="UniProtKB-SubCell"/>
</dbReference>
<dbReference type="GO" id="GO:0003824">
    <property type="term" value="F:catalytic activity"/>
    <property type="evidence" value="ECO:0007669"/>
    <property type="project" value="InterPro"/>
</dbReference>
<dbReference type="Gene3D" id="3.60.10.10">
    <property type="entry name" value="Endonuclease/exonuclease/phosphatase"/>
    <property type="match status" value="1"/>
</dbReference>
<dbReference type="HAMAP" id="MF_01119">
    <property type="entry name" value="UPF0294"/>
    <property type="match status" value="1"/>
</dbReference>
<dbReference type="InterPro" id="IPR036691">
    <property type="entry name" value="Endo/exonu/phosph_ase_sf"/>
</dbReference>
<dbReference type="InterPro" id="IPR005135">
    <property type="entry name" value="Endo/exonuclease/phosphatase"/>
</dbReference>
<dbReference type="InterPro" id="IPR022958">
    <property type="entry name" value="UPF0294"/>
</dbReference>
<dbReference type="NCBIfam" id="NF003839">
    <property type="entry name" value="PRK05421.1-1"/>
    <property type="match status" value="1"/>
</dbReference>
<dbReference type="NCBIfam" id="NF003840">
    <property type="entry name" value="PRK05421.1-2"/>
    <property type="match status" value="1"/>
</dbReference>
<dbReference type="NCBIfam" id="NF003841">
    <property type="entry name" value="PRK05421.1-3"/>
    <property type="match status" value="1"/>
</dbReference>
<dbReference type="NCBIfam" id="NF003842">
    <property type="entry name" value="PRK05421.1-4"/>
    <property type="match status" value="1"/>
</dbReference>
<dbReference type="Pfam" id="PF03372">
    <property type="entry name" value="Exo_endo_phos"/>
    <property type="match status" value="1"/>
</dbReference>
<dbReference type="SUPFAM" id="SSF56219">
    <property type="entry name" value="DNase I-like"/>
    <property type="match status" value="1"/>
</dbReference>
<comment type="subcellular location">
    <subcellularLocation>
        <location evidence="1">Cytoplasm</location>
    </subcellularLocation>
</comment>
<comment type="similarity">
    <text evidence="1">Belongs to the UPF0294 family.</text>
</comment>
<comment type="sequence caution" evidence="1">
    <conflict type="erroneous initiation">
        <sequence resource="EMBL-CDS" id="AAB08631"/>
    </conflict>
</comment>
<comment type="sequence caution" evidence="1">
    <conflict type="erroneous initiation">
        <sequence resource="EMBL-CDS" id="BAA02172"/>
    </conflict>
</comment>
<proteinExistence type="inferred from homology"/>
<organism>
    <name type="scientific">Escherichia coli (strain K12)</name>
    <dbReference type="NCBI Taxonomy" id="83333"/>
    <lineage>
        <taxon>Bacteria</taxon>
        <taxon>Pseudomonadati</taxon>
        <taxon>Pseudomonadota</taxon>
        <taxon>Gammaproteobacteria</taxon>
        <taxon>Enterobacterales</taxon>
        <taxon>Enterobacteriaceae</taxon>
        <taxon>Escherichia</taxon>
    </lineage>
</organism>
<protein>
    <recommendedName>
        <fullName>UPF0294 protein YafD</fullName>
    </recommendedName>
</protein>
<sequence>MRKNTYAMRYVAGQPAERILPPGSFASIGQALPPGEPLSTEERIRILVWNIYKQQRAEWLSVLKNYGKDAHLVLLQEAQTTPELVQFATANYLAADQVPAFVLPQHPSGVMTLSAAHPVYCCPLREREPILRLAKSALVTVYPLPDTRLLMVVNIHAVNFSLGVDVYSKQLLPIGDQIAHHSGPVIMAGDFNAWSRRRMNALYRFAREMSLRQVRFTDDQRRRAFGRPLDFVFYRGLNVSEASVLVTRASDHNPLLVEFSPGKPDK</sequence>
<feature type="chain" id="PRO_0000074637" description="UPF0294 protein YafD">
    <location>
        <begin position="1"/>
        <end position="266"/>
    </location>
</feature>
<feature type="sequence conflict" description="In Ref. 6." evidence="1" ref="6">
    <original>T</original>
    <variation>S</variation>
    <location>
        <position position="112"/>
    </location>
</feature>
<feature type="sequence conflict" description="In Ref. 6." evidence="1" ref="6">
    <original>R</original>
    <variation>G</variation>
    <location>
        <position position="223"/>
    </location>
</feature>